<feature type="initiator methionine" description="Removed" evidence="1">
    <location>
        <position position="1"/>
    </location>
</feature>
<feature type="chain" id="PRO_0000148109" description="ATP-dependent protease subunit HslV">
    <location>
        <begin position="2"/>
        <end position="176"/>
    </location>
</feature>
<feature type="active site" evidence="2">
    <location>
        <position position="2"/>
    </location>
</feature>
<feature type="binding site" evidence="2">
    <location>
        <position position="157"/>
    </location>
    <ligand>
        <name>Na(+)</name>
        <dbReference type="ChEBI" id="CHEBI:29101"/>
    </ligand>
</feature>
<feature type="binding site" evidence="2">
    <location>
        <position position="160"/>
    </location>
    <ligand>
        <name>Na(+)</name>
        <dbReference type="ChEBI" id="CHEBI:29101"/>
    </ligand>
</feature>
<feature type="binding site" evidence="2">
    <location>
        <position position="163"/>
    </location>
    <ligand>
        <name>Na(+)</name>
        <dbReference type="ChEBI" id="CHEBI:29101"/>
    </ligand>
</feature>
<protein>
    <recommendedName>
        <fullName evidence="2">ATP-dependent protease subunit HslV</fullName>
        <ecNumber evidence="2">3.4.25.2</ecNumber>
    </recommendedName>
</protein>
<name>HSLV_PECAS</name>
<sequence>MTTIVSVRRNGQVVIGGDGQATLGNTVMKGNVRKVRRLYHDRVIAGFAGGTADAFTLFELFERKLELHQGHLVKAAVELAKDWRTDRMLRRLEALLAVADENASLIITGNGDVVQPENDLIAIGSGGPYAQAAARALLENTELGARDIVEKSLGIAGDICIYTNQFHTIEELASKA</sequence>
<accession>Q6CZ92</accession>
<comment type="function">
    <text evidence="2">Protease subunit of a proteasome-like degradation complex believed to be a general protein degrading machinery.</text>
</comment>
<comment type="catalytic activity">
    <reaction evidence="2">
        <text>ATP-dependent cleavage of peptide bonds with broad specificity.</text>
        <dbReference type="EC" id="3.4.25.2"/>
    </reaction>
</comment>
<comment type="activity regulation">
    <text evidence="2">Allosterically activated by HslU binding.</text>
</comment>
<comment type="subunit">
    <text evidence="2">A double ring-shaped homohexamer of HslV is capped on each side by a ring-shaped HslU homohexamer. The assembly of the HslU/HslV complex is dependent on binding of ATP.</text>
</comment>
<comment type="subcellular location">
    <subcellularLocation>
        <location evidence="2">Cytoplasm</location>
    </subcellularLocation>
</comment>
<comment type="similarity">
    <text evidence="2">Belongs to the peptidase T1B family. HslV subfamily.</text>
</comment>
<keyword id="KW-0021">Allosteric enzyme</keyword>
<keyword id="KW-0963">Cytoplasm</keyword>
<keyword id="KW-0378">Hydrolase</keyword>
<keyword id="KW-0479">Metal-binding</keyword>
<keyword id="KW-0645">Protease</keyword>
<keyword id="KW-1185">Reference proteome</keyword>
<keyword id="KW-0915">Sodium</keyword>
<keyword id="KW-0888">Threonine protease</keyword>
<reference key="1">
    <citation type="journal article" date="2004" name="Proc. Natl. Acad. Sci. U.S.A.">
        <title>Genome sequence of the enterobacterial phytopathogen Erwinia carotovora subsp. atroseptica and characterization of virulence factors.</title>
        <authorList>
            <person name="Bell K.S."/>
            <person name="Sebaihia M."/>
            <person name="Pritchard L."/>
            <person name="Holden M.T.G."/>
            <person name="Hyman L.J."/>
            <person name="Holeva M.C."/>
            <person name="Thomson N.R."/>
            <person name="Bentley S.D."/>
            <person name="Churcher L.J.C."/>
            <person name="Mungall K."/>
            <person name="Atkin R."/>
            <person name="Bason N."/>
            <person name="Brooks K."/>
            <person name="Chillingworth T."/>
            <person name="Clark K."/>
            <person name="Doggett J."/>
            <person name="Fraser A."/>
            <person name="Hance Z."/>
            <person name="Hauser H."/>
            <person name="Jagels K."/>
            <person name="Moule S."/>
            <person name="Norbertczak H."/>
            <person name="Ormond D."/>
            <person name="Price C."/>
            <person name="Quail M.A."/>
            <person name="Sanders M."/>
            <person name="Walker D."/>
            <person name="Whitehead S."/>
            <person name="Salmond G.P.C."/>
            <person name="Birch P.R.J."/>
            <person name="Parkhill J."/>
            <person name="Toth I.K."/>
        </authorList>
    </citation>
    <scope>NUCLEOTIDE SEQUENCE [LARGE SCALE GENOMIC DNA]</scope>
    <source>
        <strain>SCRI 1043 / ATCC BAA-672</strain>
    </source>
</reference>
<proteinExistence type="inferred from homology"/>
<gene>
    <name evidence="2" type="primary">hslV</name>
    <name type="ordered locus">ECA4261</name>
</gene>
<dbReference type="EC" id="3.4.25.2" evidence="2"/>
<dbReference type="EMBL" id="BX950851">
    <property type="protein sequence ID" value="CAG77158.1"/>
    <property type="molecule type" value="Genomic_DNA"/>
</dbReference>
<dbReference type="RefSeq" id="WP_011095730.1">
    <property type="nucleotide sequence ID" value="NC_004547.2"/>
</dbReference>
<dbReference type="SMR" id="Q6CZ92"/>
<dbReference type="STRING" id="218491.ECA4261"/>
<dbReference type="MEROPS" id="T01.006"/>
<dbReference type="GeneID" id="57210933"/>
<dbReference type="KEGG" id="eca:ECA4261"/>
<dbReference type="eggNOG" id="COG5405">
    <property type="taxonomic scope" value="Bacteria"/>
</dbReference>
<dbReference type="HOGENOM" id="CLU_093872_1_0_6"/>
<dbReference type="OrthoDB" id="9804884at2"/>
<dbReference type="Proteomes" id="UP000007966">
    <property type="component" value="Chromosome"/>
</dbReference>
<dbReference type="GO" id="GO:0009376">
    <property type="term" value="C:HslUV protease complex"/>
    <property type="evidence" value="ECO:0007669"/>
    <property type="project" value="UniProtKB-UniRule"/>
</dbReference>
<dbReference type="GO" id="GO:0005839">
    <property type="term" value="C:proteasome core complex"/>
    <property type="evidence" value="ECO:0007669"/>
    <property type="project" value="InterPro"/>
</dbReference>
<dbReference type="GO" id="GO:0046872">
    <property type="term" value="F:metal ion binding"/>
    <property type="evidence" value="ECO:0007669"/>
    <property type="project" value="UniProtKB-KW"/>
</dbReference>
<dbReference type="GO" id="GO:0004298">
    <property type="term" value="F:threonine-type endopeptidase activity"/>
    <property type="evidence" value="ECO:0007669"/>
    <property type="project" value="UniProtKB-KW"/>
</dbReference>
<dbReference type="GO" id="GO:0051603">
    <property type="term" value="P:proteolysis involved in protein catabolic process"/>
    <property type="evidence" value="ECO:0007669"/>
    <property type="project" value="InterPro"/>
</dbReference>
<dbReference type="CDD" id="cd01913">
    <property type="entry name" value="protease_HslV"/>
    <property type="match status" value="1"/>
</dbReference>
<dbReference type="FunFam" id="3.60.20.10:FF:000002">
    <property type="entry name" value="ATP-dependent protease subunit HslV"/>
    <property type="match status" value="1"/>
</dbReference>
<dbReference type="Gene3D" id="3.60.20.10">
    <property type="entry name" value="Glutamine Phosphoribosylpyrophosphate, subunit 1, domain 1"/>
    <property type="match status" value="1"/>
</dbReference>
<dbReference type="HAMAP" id="MF_00248">
    <property type="entry name" value="HslV"/>
    <property type="match status" value="1"/>
</dbReference>
<dbReference type="InterPro" id="IPR022281">
    <property type="entry name" value="ATP-dep_Prtase_HsIV_su"/>
</dbReference>
<dbReference type="InterPro" id="IPR029055">
    <property type="entry name" value="Ntn_hydrolases_N"/>
</dbReference>
<dbReference type="InterPro" id="IPR001353">
    <property type="entry name" value="Proteasome_sua/b"/>
</dbReference>
<dbReference type="InterPro" id="IPR023333">
    <property type="entry name" value="Proteasome_suB-type"/>
</dbReference>
<dbReference type="NCBIfam" id="TIGR03692">
    <property type="entry name" value="ATP_dep_HslV"/>
    <property type="match status" value="1"/>
</dbReference>
<dbReference type="NCBIfam" id="NF003964">
    <property type="entry name" value="PRK05456.1"/>
    <property type="match status" value="1"/>
</dbReference>
<dbReference type="PANTHER" id="PTHR32194:SF0">
    <property type="entry name" value="ATP-DEPENDENT PROTEASE SUBUNIT HSLV"/>
    <property type="match status" value="1"/>
</dbReference>
<dbReference type="PANTHER" id="PTHR32194">
    <property type="entry name" value="METALLOPROTEASE TLDD"/>
    <property type="match status" value="1"/>
</dbReference>
<dbReference type="Pfam" id="PF00227">
    <property type="entry name" value="Proteasome"/>
    <property type="match status" value="1"/>
</dbReference>
<dbReference type="PIRSF" id="PIRSF039093">
    <property type="entry name" value="HslV"/>
    <property type="match status" value="1"/>
</dbReference>
<dbReference type="SUPFAM" id="SSF56235">
    <property type="entry name" value="N-terminal nucleophile aminohydrolases (Ntn hydrolases)"/>
    <property type="match status" value="1"/>
</dbReference>
<dbReference type="PROSITE" id="PS51476">
    <property type="entry name" value="PROTEASOME_BETA_2"/>
    <property type="match status" value="1"/>
</dbReference>
<evidence type="ECO:0000250" key="1"/>
<evidence type="ECO:0000255" key="2">
    <source>
        <dbReference type="HAMAP-Rule" id="MF_00248"/>
    </source>
</evidence>
<organism>
    <name type="scientific">Pectobacterium atrosepticum (strain SCRI 1043 / ATCC BAA-672)</name>
    <name type="common">Erwinia carotovora subsp. atroseptica</name>
    <dbReference type="NCBI Taxonomy" id="218491"/>
    <lineage>
        <taxon>Bacteria</taxon>
        <taxon>Pseudomonadati</taxon>
        <taxon>Pseudomonadota</taxon>
        <taxon>Gammaproteobacteria</taxon>
        <taxon>Enterobacterales</taxon>
        <taxon>Pectobacteriaceae</taxon>
        <taxon>Pectobacterium</taxon>
    </lineage>
</organism>